<gene>
    <name evidence="10" type="primary">Celsr2</name>
    <name type="synonym">Megf3</name>
</gene>
<comment type="function">
    <text>Receptor that may have an important role in cell/cell signaling during nervous system formation.</text>
</comment>
<comment type="subunit">
    <text evidence="5">Heterodimer of 2 chains generated by proteolytic processing; the large extracellular N-terminal fragment and the membrane-bound C-terminal fragment predominantly remain associated and non-covalently linked.</text>
</comment>
<comment type="subcellular location">
    <subcellularLocation>
        <location>Cell membrane</location>
        <topology>Multi-pass membrane protein</topology>
    </subcellularLocation>
</comment>
<comment type="tissue specificity">
    <text>Expressed in the brain. High expression in cerebellum and olfactory bulb. Weaker expression in cerebral cortex, hippocampus and brain stem.</text>
</comment>
<comment type="PTM">
    <text evidence="1">The iron and 2-oxoglutarate dependent 3-hydroxylation of aspartate and asparagine is (R) stereospecific within EGF domains.</text>
</comment>
<comment type="PTM">
    <text evidence="5">Autoproteolytically processed at the GPS region of the GAIN-B domain; this cleavage modulates receptor activity.</text>
</comment>
<comment type="similarity">
    <text evidence="9">Belongs to the G-protein coupled receptor 2 family. LN-TM7 subfamily.</text>
</comment>
<proteinExistence type="evidence at protein level"/>
<sequence>EDQVSYTLAITARDNGIPQKSDTTYLEILVNDVNDNAPQFLRDSYQGSVYEDVPPFTSVLQISATDRDSGLNGRVFYTFQGGDDGDGDFIVESTSGIVRTLRRLDRENVAQYILRAYAVDKGMPPARTPMEVTVTVLDVNDNPPVFEQDEFDVFVEENSPIGLAVARVTATDPDEGTNAQIMYQIVEGNIPEVFQLDIFSGELTALVDLDYEDRPEYILVIQATSAPLVSRATVHVRLLDRNDNPPVLGNFEILFNNYVTNRSSSFPGGAIGRVPAHDPDISDSLTYSFERGNELSLVLLNASTGELRLSRALDNNRPLEAIMSVLVSDGVHSVTAQCSLRVTIITDEMLTHSITLRLEDMSPERFLSPLLGLFIQAVAATLATPPDHVVVFNVQRDTDAPGGHILNVSLSVGQPPGPGGGPPFLPSEDLQERLYLNRSLLTAISAQRVLPFDDNICLREPCENYMRCVSVLRFDSSAPFIASSSVLFRPIHPVGGLRCRCPPGFTGDYCETEVDLCYSRPCGPHGHCRSREGGYTCLCRDGYTGEHCEVSARSGRCTPGVCKNGGTCVNLLVGGFKCDCPSGDFEKPFCQVTTRSFPARSFITFRGLRQRFHFTLALSFATKERDGLLLYNGRFNEKHDFVALEVIQEQVQLTFSAGESTTTVSPFVPGGVSDGQWHTVQLKYYNKPLLGQTGLPQGPSEQKVAVVSVDGCDTGVALRFGAMLGNYSCAAQGTQGGSKKSLDLTGPLLLGGVPDLPESFPVRMRHFVGCMKNLQVDSRHVDMADFIANNGTVPGCPTKKNVCDSNTCHNGGTCVNQWDAFSCECPLGFGGKSCAQEMANPQRFLGSSLVAWHGLSLPISQPWHLSLMFRTRQADGVLLQAVTRGRSTITLQLRAGHVVLSVEGTGLQASSLRLEPGRANDGDWHHAQLSLGASGGPGHAILSFDYGQQKAEGNLGPRLHGLHLSNMTVGGVPGPASSVARGFRGCLQGVRVSETPEGVSSLDPSRGESINVEPGCSWPDPCDSNPCPTNSYCSNDWDSYSCSCDPGYYGDNCTNVCDLNPCEHQSACTRKPSAPHGYICECLPNYLGPYCETRIDQPCPRGWWGHPTCGPCNCDVSKGFDPDCNKTSGECHCKENHYRPPSSPTCLLCDCYPTGSLSRVCDPEDGQCPCKPGVIGRQCDRCDNPFAEVTTNGCEVNYDSCPRAIEAGIWWPRTRFGLPAAAPCPKGSFGTAVRHCDEHRGWLPPNLFNCTSVTFSELKGFAERLQRNESGLDSGRSQRLALLLRNATQHTSGYFGSDVKVAYQLATRLLAHESAQRGFGLSATQDVHFTENLLRVGSALLDAANKRHWELIQQTEGGTAWLLQHYEAYASALAQNMRHTYLSPFTIVTPNIVISVVRLDKGNFAGTKLPRYEALRGERPPDLETTVILPESVFREMPPMVRSAGPGEAQETEELARRQRRHPELSQGEAVASVIIYHTLAGLLPHNYDPDKRSLRVPKRPVINTPVVSISVHDDEELLPRALDKPVTVQFRLLETEERTKPICVFWNHSILVSGTGGWSARGCEVVFRNESHVSCQCNHMTSFAVLMDVSRRENGEILPLKTLTYVALGVTLAALMITFLFLTLLRALRSNQHGIRRNLTAALGLAQLVFLLGINQADLPFACTVIAILLHFLYLCTFSWALLEALHLYRALTEVRDVNASPMRFYYMLGWGVPAFITGLAVGLDPEGYGNPDFCWLSIYDTLIWSFAGPVAFAVSMSVFLYILSARASCAAQRQGFEKKGPVSGLRSSFTVLLLLSATWLLALLSVNSDTLLFHYLFAACNCVQGPFIFLSYVVLSKEVRKALKFACSRKPSPDPALTTKSTLTSSYNCPSPYADGRLYQPYGDSAGSLHSASRSGKSQPSYIPFLLREESTLNPGQVPPGLGDPSGLFMEGQAQQHDPDTDSDSDLSLEDDQSGSYASTHSSDSEEEEEEAAFPGEQGWDSLLGPGAERLPLHSTPKDGGPGSGKVPWPGDFGTTTKENSGSGPLEERPRENGDALTREGSLGPLPGPSTQPHKGILKKKCLPTISEKSSLLRLPLEQGTGSSRGSTASEGSRNGPPPRPPPRQSLQEQLNGVMPIAMSIKAGTVDEDSSGSEFLFFNFLH</sequence>
<feature type="chain" id="PRO_0000070345" description="Cadherin EGF LAG seven-pass G-type receptor 2">
    <location>
        <begin position="1" status="less than"/>
        <end position="2144"/>
    </location>
</feature>
<feature type="topological domain" description="Extracellular" evidence="2">
    <location>
        <begin position="1"/>
        <end position="1605"/>
    </location>
</feature>
<feature type="transmembrane region" description="Helical; Name=1" evidence="2">
    <location>
        <begin position="1606"/>
        <end position="1626"/>
    </location>
</feature>
<feature type="topological domain" description="Cytoplasmic" evidence="2">
    <location>
        <begin position="1627"/>
        <end position="1641"/>
    </location>
</feature>
<feature type="transmembrane region" description="Helical; Name=2" evidence="2">
    <location>
        <begin position="1642"/>
        <end position="1662"/>
    </location>
</feature>
<feature type="topological domain" description="Extracellular" evidence="2">
    <location>
        <position position="1663"/>
    </location>
</feature>
<feature type="transmembrane region" description="Helical; Name=3" evidence="2">
    <location>
        <begin position="1664"/>
        <end position="1684"/>
    </location>
</feature>
<feature type="topological domain" description="Cytoplasmic" evidence="2">
    <location>
        <begin position="1685"/>
        <end position="1705"/>
    </location>
</feature>
<feature type="transmembrane region" description="Helical; Name=4" evidence="2">
    <location>
        <begin position="1706"/>
        <end position="1726"/>
    </location>
</feature>
<feature type="topological domain" description="Extracellular" evidence="2">
    <location>
        <begin position="1727"/>
        <end position="1744"/>
    </location>
</feature>
<feature type="transmembrane region" description="Helical; Name=5" evidence="2">
    <location>
        <begin position="1745"/>
        <end position="1765"/>
    </location>
</feature>
<feature type="topological domain" description="Cytoplasmic" evidence="2">
    <location>
        <begin position="1766"/>
        <end position="1789"/>
    </location>
</feature>
<feature type="transmembrane region" description="Helical; Name=6" evidence="2">
    <location>
        <begin position="1790"/>
        <end position="1810"/>
    </location>
</feature>
<feature type="topological domain" description="Extracellular" evidence="2">
    <location>
        <begin position="1811"/>
        <end position="1816"/>
    </location>
</feature>
<feature type="transmembrane region" description="Helical; Name=7" evidence="2">
    <location>
        <begin position="1817"/>
        <end position="1837"/>
    </location>
</feature>
<feature type="topological domain" description="Cytoplasmic" evidence="2">
    <location>
        <begin position="1838"/>
        <end position="2144"/>
    </location>
</feature>
<feature type="domain" description="Cadherin 1" evidence="3">
    <location>
        <begin position="1" status="less than"/>
        <end position="40"/>
    </location>
</feature>
<feature type="domain" description="Cadherin 2" evidence="3">
    <location>
        <begin position="41"/>
        <end position="146"/>
    </location>
</feature>
<feature type="domain" description="Cadherin 3" evidence="3">
    <location>
        <begin position="147"/>
        <end position="248"/>
    </location>
</feature>
<feature type="domain" description="Cadherin 4" evidence="3">
    <location>
        <begin position="253"/>
        <end position="371"/>
    </location>
</feature>
<feature type="domain" description="EGF-like 1; calcium-binding" evidence="4">
    <location>
        <begin position="453"/>
        <end position="511"/>
    </location>
</feature>
<feature type="domain" description="EGF-like 2; calcium-binding" evidence="4">
    <location>
        <begin position="513"/>
        <end position="549"/>
    </location>
</feature>
<feature type="domain" description="EGF-like 3; calcium-binding" evidence="4">
    <location>
        <begin position="553"/>
        <end position="591"/>
    </location>
</feature>
<feature type="domain" description="Laminin G-like 1" evidence="6">
    <location>
        <begin position="592"/>
        <end position="796"/>
    </location>
</feature>
<feature type="domain" description="EGF-like 4; calcium-binding" evidence="4">
    <location>
        <begin position="799"/>
        <end position="835"/>
    </location>
</feature>
<feature type="domain" description="Laminin G-like 2" evidence="6">
    <location>
        <begin position="839"/>
        <end position="1016"/>
    </location>
</feature>
<feature type="domain" description="EGF-like 5; calcium-binding" evidence="4">
    <location>
        <begin position="1018"/>
        <end position="1053"/>
    </location>
</feature>
<feature type="domain" description="EGF-like 6; calcium-binding" evidence="4">
    <location>
        <begin position="1054"/>
        <end position="1092"/>
    </location>
</feature>
<feature type="domain" description="EGF-like 7; calcium-binding" evidence="4">
    <location>
        <begin position="1108"/>
        <end position="1147"/>
    </location>
</feature>
<feature type="domain" description="Laminin EGF-like" evidence="7">
    <location>
        <begin position="1149"/>
        <end position="1196"/>
    </location>
</feature>
<feature type="domain" description="GAIN-B" evidence="5">
    <location>
        <begin position="1424"/>
        <end position="1594"/>
    </location>
</feature>
<feature type="region of interest" description="Disordered" evidence="8">
    <location>
        <begin position="1439"/>
        <end position="1466"/>
    </location>
</feature>
<feature type="region of interest" description="GPS" evidence="5">
    <location>
        <begin position="1544"/>
        <end position="1594"/>
    </location>
</feature>
<feature type="region of interest" description="Disordered" evidence="8">
    <location>
        <begin position="1914"/>
        <end position="2109"/>
    </location>
</feature>
<feature type="compositionally biased region" description="Acidic residues" evidence="8">
    <location>
        <begin position="1943"/>
        <end position="1955"/>
    </location>
</feature>
<feature type="compositionally biased region" description="Polar residues" evidence="8">
    <location>
        <begin position="2016"/>
        <end position="2025"/>
    </location>
</feature>
<feature type="compositionally biased region" description="Basic and acidic residues" evidence="8">
    <location>
        <begin position="2028"/>
        <end position="2040"/>
    </location>
</feature>
<feature type="compositionally biased region" description="Polar residues" evidence="8">
    <location>
        <begin position="2082"/>
        <end position="2095"/>
    </location>
</feature>
<feature type="site" description="Cleavage; by autolysis" evidence="5">
    <location>
        <begin position="1581"/>
        <end position="1582"/>
    </location>
</feature>
<feature type="modified residue" description="(3R)-3-hydroxyasparagine" evidence="2">
    <location>
        <position position="816"/>
    </location>
</feature>
<feature type="modified residue" description="(3R)-3-hydroxyasparagine" evidence="2">
    <location>
        <position position="1035"/>
    </location>
</feature>
<feature type="glycosylation site" description="N-linked (GlcNAc...) asparagine" evidence="2">
    <location>
        <position position="261"/>
    </location>
</feature>
<feature type="glycosylation site" description="N-linked (GlcNAc...) asparagine" evidence="2">
    <location>
        <position position="301"/>
    </location>
</feature>
<feature type="glycosylation site" description="N-linked (GlcNAc...) asparagine" evidence="2">
    <location>
        <position position="407"/>
    </location>
</feature>
<feature type="glycosylation site" description="N-linked (GlcNAc...) asparagine" evidence="2">
    <location>
        <position position="437"/>
    </location>
</feature>
<feature type="glycosylation site" description="N-linked (GlcNAc...) asparagine" evidence="2">
    <location>
        <position position="726"/>
    </location>
</feature>
<feature type="glycosylation site" description="N-linked (GlcNAc...) asparagine" evidence="2">
    <location>
        <position position="790"/>
    </location>
</feature>
<feature type="glycosylation site" description="N-linked (GlcNAc...) asparagine" evidence="2">
    <location>
        <position position="966"/>
    </location>
</feature>
<feature type="glycosylation site" description="N-linked (GlcNAc...) asparagine" evidence="2">
    <location>
        <position position="1052"/>
    </location>
</feature>
<feature type="glycosylation site" description="N-linked (GlcNAc...) asparagine" evidence="2">
    <location>
        <position position="1125"/>
    </location>
</feature>
<feature type="glycosylation site" description="N-linked (GlcNAc...) asparagine" evidence="2">
    <location>
        <position position="1249"/>
    </location>
</feature>
<feature type="glycosylation site" description="N-linked (GlcNAc...) asparagine" evidence="2">
    <location>
        <position position="1268"/>
    </location>
</feature>
<feature type="glycosylation site" description="N-linked (GlcNAc...) asparagine" evidence="2">
    <location>
        <position position="1286"/>
    </location>
</feature>
<feature type="glycosylation site" description="N-linked (GlcNAc...) asparagine" evidence="2">
    <location>
        <position position="1548"/>
    </location>
</feature>
<feature type="glycosylation site" description="N-linked (GlcNAc...) asparagine" evidence="2">
    <location>
        <position position="1570"/>
    </location>
</feature>
<feature type="disulfide bond" evidence="1">
    <location>
        <begin position="457"/>
        <end position="468"/>
    </location>
</feature>
<feature type="disulfide bond" evidence="1">
    <location>
        <begin position="462"/>
        <end position="499"/>
    </location>
</feature>
<feature type="disulfide bond" evidence="1">
    <location>
        <begin position="501"/>
        <end position="510"/>
    </location>
</feature>
<feature type="disulfide bond" evidence="1">
    <location>
        <begin position="517"/>
        <end position="528"/>
    </location>
</feature>
<feature type="disulfide bond" evidence="1">
    <location>
        <begin position="522"/>
        <end position="537"/>
    </location>
</feature>
<feature type="disulfide bond" evidence="1">
    <location>
        <begin position="539"/>
        <end position="548"/>
    </location>
</feature>
<feature type="disulfide bond" evidence="1">
    <location>
        <begin position="557"/>
        <end position="568"/>
    </location>
</feature>
<feature type="disulfide bond" evidence="1">
    <location>
        <begin position="562"/>
        <end position="578"/>
    </location>
</feature>
<feature type="disulfide bond" evidence="1">
    <location>
        <begin position="580"/>
        <end position="590"/>
    </location>
</feature>
<feature type="disulfide bond" evidence="1">
    <location>
        <begin position="770"/>
        <end position="796"/>
    </location>
</feature>
<feature type="disulfide bond" evidence="1">
    <location>
        <begin position="803"/>
        <end position="814"/>
    </location>
</feature>
<feature type="disulfide bond" evidence="1">
    <location>
        <begin position="808"/>
        <end position="823"/>
    </location>
</feature>
<feature type="disulfide bond" evidence="1">
    <location>
        <begin position="825"/>
        <end position="834"/>
    </location>
</feature>
<feature type="disulfide bond" evidence="1">
    <location>
        <begin position="986"/>
        <end position="1016"/>
    </location>
</feature>
<feature type="disulfide bond" evidence="1">
    <location>
        <begin position="1022"/>
        <end position="1033"/>
    </location>
</feature>
<feature type="disulfide bond" evidence="1">
    <location>
        <begin position="1027"/>
        <end position="1042"/>
    </location>
</feature>
<feature type="disulfide bond" evidence="1">
    <location>
        <begin position="1044"/>
        <end position="1053"/>
    </location>
</feature>
<feature type="disulfide bond" evidence="1">
    <location>
        <begin position="1057"/>
        <end position="1068"/>
    </location>
</feature>
<feature type="disulfide bond" evidence="1">
    <location>
        <begin position="1062"/>
        <end position="1080"/>
    </location>
</feature>
<feature type="disulfide bond" evidence="1">
    <location>
        <begin position="1082"/>
        <end position="1091"/>
    </location>
</feature>
<feature type="disulfide bond" evidence="1">
    <location>
        <begin position="1112"/>
        <end position="1124"/>
    </location>
</feature>
<feature type="disulfide bond" evidence="1">
    <location>
        <begin position="1114"/>
        <end position="1131"/>
    </location>
</feature>
<feature type="disulfide bond" evidence="1">
    <location>
        <begin position="1133"/>
        <end position="1146"/>
    </location>
</feature>
<feature type="disulfide bond" evidence="1">
    <location>
        <begin position="1149"/>
        <end position="1161"/>
    </location>
</feature>
<feature type="disulfide bond" evidence="1">
    <location>
        <begin position="1151"/>
        <end position="1168"/>
    </location>
</feature>
<feature type="disulfide bond" evidence="1">
    <location>
        <begin position="1170"/>
        <end position="1179"/>
    </location>
</feature>
<feature type="disulfide bond" evidence="1">
    <location>
        <begin position="1182"/>
        <end position="1194"/>
    </location>
</feature>
<feature type="disulfide bond" evidence="5">
    <location>
        <begin position="1544"/>
        <end position="1576"/>
    </location>
</feature>
<feature type="disulfide bond" evidence="5">
    <location>
        <begin position="1564"/>
        <end position="1578"/>
    </location>
</feature>
<feature type="non-terminal residue">
    <location>
        <position position="1"/>
    </location>
</feature>
<reference key="1">
    <citation type="journal article" date="1998" name="Genomics">
        <title>Identification of high-molecular-weight proteins with multiple EGF-like motifs by motif-trap screening.</title>
        <authorList>
            <person name="Nakayama M."/>
            <person name="Nakajima D."/>
            <person name="Nagase T."/>
            <person name="Nomura N."/>
            <person name="Seki N."/>
            <person name="Ohara O."/>
        </authorList>
    </citation>
    <scope>NUCLEOTIDE SEQUENCE [MRNA]</scope>
    <source>
        <strain>Sprague-Dawley</strain>
        <tissue>Brain</tissue>
    </source>
</reference>
<reference key="2">
    <citation type="journal article" date="2012" name="Nat. Commun.">
        <title>Quantitative maps of protein phosphorylation sites across 14 different rat organs and tissues.</title>
        <authorList>
            <person name="Lundby A."/>
            <person name="Secher A."/>
            <person name="Lage K."/>
            <person name="Nordsborg N.B."/>
            <person name="Dmytriyev A."/>
            <person name="Lundby C."/>
            <person name="Olsen J.V."/>
        </authorList>
    </citation>
    <scope>IDENTIFICATION BY MASS SPECTROMETRY [LARGE SCALE ANALYSIS]</scope>
</reference>
<protein>
    <recommendedName>
        <fullName evidence="9">Cadherin EGF LAG seven-pass G-type receptor 2</fullName>
    </recommendedName>
    <alternativeName>
        <fullName>Multiple epidermal growth factor-like domains protein 3</fullName>
        <shortName>Multiple EGF-like domains protein 3</shortName>
    </alternativeName>
</protein>
<accession>Q9QYP2</accession>
<keyword id="KW-0106">Calcium</keyword>
<keyword id="KW-1003">Cell membrane</keyword>
<keyword id="KW-0217">Developmental protein</keyword>
<keyword id="KW-1015">Disulfide bond</keyword>
<keyword id="KW-0245">EGF-like domain</keyword>
<keyword id="KW-0297">G-protein coupled receptor</keyword>
<keyword id="KW-0325">Glycoprotein</keyword>
<keyword id="KW-0379">Hydroxylation</keyword>
<keyword id="KW-0424">Laminin EGF-like domain</keyword>
<keyword id="KW-0472">Membrane</keyword>
<keyword id="KW-0675">Receptor</keyword>
<keyword id="KW-1185">Reference proteome</keyword>
<keyword id="KW-0677">Repeat</keyword>
<keyword id="KW-0807">Transducer</keyword>
<keyword id="KW-0812">Transmembrane</keyword>
<keyword id="KW-1133">Transmembrane helix</keyword>
<organism>
    <name type="scientific">Rattus norvegicus</name>
    <name type="common">Rat</name>
    <dbReference type="NCBI Taxonomy" id="10116"/>
    <lineage>
        <taxon>Eukaryota</taxon>
        <taxon>Metazoa</taxon>
        <taxon>Chordata</taxon>
        <taxon>Craniata</taxon>
        <taxon>Vertebrata</taxon>
        <taxon>Euteleostomi</taxon>
        <taxon>Mammalia</taxon>
        <taxon>Eutheria</taxon>
        <taxon>Euarchontoglires</taxon>
        <taxon>Glires</taxon>
        <taxon>Rodentia</taxon>
        <taxon>Myomorpha</taxon>
        <taxon>Muroidea</taxon>
        <taxon>Muridae</taxon>
        <taxon>Murinae</taxon>
        <taxon>Rattus</taxon>
    </lineage>
</organism>
<evidence type="ECO:0000250" key="1"/>
<evidence type="ECO:0000255" key="2"/>
<evidence type="ECO:0000255" key="3">
    <source>
        <dbReference type="PROSITE-ProRule" id="PRU00043"/>
    </source>
</evidence>
<evidence type="ECO:0000255" key="4">
    <source>
        <dbReference type="PROSITE-ProRule" id="PRU00076"/>
    </source>
</evidence>
<evidence type="ECO:0000255" key="5">
    <source>
        <dbReference type="PROSITE-ProRule" id="PRU00098"/>
    </source>
</evidence>
<evidence type="ECO:0000255" key="6">
    <source>
        <dbReference type="PROSITE-ProRule" id="PRU00122"/>
    </source>
</evidence>
<evidence type="ECO:0000255" key="7">
    <source>
        <dbReference type="PROSITE-ProRule" id="PRU00460"/>
    </source>
</evidence>
<evidence type="ECO:0000256" key="8">
    <source>
        <dbReference type="SAM" id="MobiDB-lite"/>
    </source>
</evidence>
<evidence type="ECO:0000305" key="9"/>
<evidence type="ECO:0000312" key="10">
    <source>
        <dbReference type="RGD" id="69237"/>
    </source>
</evidence>
<dbReference type="EMBL" id="AB011529">
    <property type="protein sequence ID" value="BAA88687.1"/>
    <property type="molecule type" value="mRNA"/>
</dbReference>
<dbReference type="SMR" id="Q9QYP2"/>
<dbReference type="FunCoup" id="Q9QYP2">
    <property type="interactions" value="1421"/>
</dbReference>
<dbReference type="STRING" id="10116.ENSRNOP00000027263"/>
<dbReference type="GlyCosmos" id="Q9QYP2">
    <property type="glycosylation" value="14 sites, 2 glycans"/>
</dbReference>
<dbReference type="GlyGen" id="Q9QYP2">
    <property type="glycosylation" value="15 sites, 2 N-linked glycans (1 site)"/>
</dbReference>
<dbReference type="iPTMnet" id="Q9QYP2"/>
<dbReference type="PhosphoSitePlus" id="Q9QYP2"/>
<dbReference type="PaxDb" id="10116-ENSRNOP00000027263"/>
<dbReference type="UCSC" id="RGD:69237">
    <property type="organism name" value="rat"/>
</dbReference>
<dbReference type="AGR" id="RGD:69237"/>
<dbReference type="RGD" id="69237">
    <property type="gene designation" value="Celsr2"/>
</dbReference>
<dbReference type="eggNOG" id="KOG4289">
    <property type="taxonomic scope" value="Eukaryota"/>
</dbReference>
<dbReference type="InParanoid" id="Q9QYP2"/>
<dbReference type="PhylomeDB" id="Q9QYP2"/>
<dbReference type="Proteomes" id="UP000002494">
    <property type="component" value="Unplaced"/>
</dbReference>
<dbReference type="GO" id="GO:0005737">
    <property type="term" value="C:cytoplasm"/>
    <property type="evidence" value="ECO:0000266"/>
    <property type="project" value="RGD"/>
</dbReference>
<dbReference type="GO" id="GO:0005886">
    <property type="term" value="C:plasma membrane"/>
    <property type="evidence" value="ECO:0000266"/>
    <property type="project" value="RGD"/>
</dbReference>
<dbReference type="GO" id="GO:0005509">
    <property type="term" value="F:calcium ion binding"/>
    <property type="evidence" value="ECO:0007669"/>
    <property type="project" value="InterPro"/>
</dbReference>
<dbReference type="GO" id="GO:0004930">
    <property type="term" value="F:G protein-coupled receptor activity"/>
    <property type="evidence" value="ECO:0007669"/>
    <property type="project" value="UniProtKB-KW"/>
</dbReference>
<dbReference type="GO" id="GO:0033326">
    <property type="term" value="P:cerebrospinal fluid secretion"/>
    <property type="evidence" value="ECO:0000266"/>
    <property type="project" value="RGD"/>
</dbReference>
<dbReference type="GO" id="GO:0060271">
    <property type="term" value="P:cilium assembly"/>
    <property type="evidence" value="ECO:0000266"/>
    <property type="project" value="RGD"/>
</dbReference>
<dbReference type="GO" id="GO:0003341">
    <property type="term" value="P:cilium movement"/>
    <property type="evidence" value="ECO:0000266"/>
    <property type="project" value="RGD"/>
</dbReference>
<dbReference type="GO" id="GO:0048813">
    <property type="term" value="P:dendrite morphogenesis"/>
    <property type="evidence" value="ECO:0000315"/>
    <property type="project" value="BHF-UCL"/>
</dbReference>
<dbReference type="GO" id="GO:0007156">
    <property type="term" value="P:homophilic cell adhesion via plasma membrane adhesion molecules"/>
    <property type="evidence" value="ECO:0000266"/>
    <property type="project" value="RGD"/>
</dbReference>
<dbReference type="GO" id="GO:0097475">
    <property type="term" value="P:motor neuron migration"/>
    <property type="evidence" value="ECO:0000266"/>
    <property type="project" value="RGD"/>
</dbReference>
<dbReference type="GO" id="GO:0021999">
    <property type="term" value="P:neural plate anterior/posterior regionalization"/>
    <property type="evidence" value="ECO:0000266"/>
    <property type="project" value="RGD"/>
</dbReference>
<dbReference type="GO" id="GO:0022407">
    <property type="term" value="P:regulation of cell-cell adhesion"/>
    <property type="evidence" value="ECO:0000315"/>
    <property type="project" value="BHF-UCL"/>
</dbReference>
<dbReference type="GO" id="GO:0006355">
    <property type="term" value="P:regulation of DNA-templated transcription"/>
    <property type="evidence" value="ECO:0000266"/>
    <property type="project" value="RGD"/>
</dbReference>
<dbReference type="GO" id="GO:0032880">
    <property type="term" value="P:regulation of protein localization"/>
    <property type="evidence" value="ECO:0000266"/>
    <property type="project" value="RGD"/>
</dbReference>
<dbReference type="GO" id="GO:0007283">
    <property type="term" value="P:spermatogenesis"/>
    <property type="evidence" value="ECO:0000270"/>
    <property type="project" value="RGD"/>
</dbReference>
<dbReference type="GO" id="GO:0021591">
    <property type="term" value="P:ventricular system development"/>
    <property type="evidence" value="ECO:0000266"/>
    <property type="project" value="RGD"/>
</dbReference>
<dbReference type="GO" id="GO:0016055">
    <property type="term" value="P:Wnt signaling pathway"/>
    <property type="evidence" value="ECO:0000266"/>
    <property type="project" value="RGD"/>
</dbReference>
<dbReference type="CDD" id="cd15992">
    <property type="entry name" value="7tmB2_CELSR2"/>
    <property type="match status" value="1"/>
</dbReference>
<dbReference type="CDD" id="cd11304">
    <property type="entry name" value="Cadherin_repeat"/>
    <property type="match status" value="4"/>
</dbReference>
<dbReference type="CDD" id="cd00054">
    <property type="entry name" value="EGF_CA"/>
    <property type="match status" value="4"/>
</dbReference>
<dbReference type="CDD" id="cd00055">
    <property type="entry name" value="EGF_Lam"/>
    <property type="match status" value="1"/>
</dbReference>
<dbReference type="CDD" id="cd00110">
    <property type="entry name" value="LamG"/>
    <property type="match status" value="2"/>
</dbReference>
<dbReference type="FunFam" id="2.10.25.10:FF:000011">
    <property type="entry name" value="Cadherin EGF LAG seven-pass G-type receptor"/>
    <property type="match status" value="1"/>
</dbReference>
<dbReference type="FunFam" id="1.20.1070.10:FF:000112">
    <property type="entry name" value="Cadherin EGF LAG seven-pass G-type receptor 2"/>
    <property type="match status" value="1"/>
</dbReference>
<dbReference type="FunFam" id="2.60.120.200:FF:000020">
    <property type="entry name" value="Cadherin EGF LAG seven-pass G-type receptor 2"/>
    <property type="match status" value="1"/>
</dbReference>
<dbReference type="FunFam" id="2.60.120.200:FF:000062">
    <property type="entry name" value="Cadherin EGF LAG seven-pass G-type receptor 2"/>
    <property type="match status" value="1"/>
</dbReference>
<dbReference type="FunFam" id="2.60.220.50:FF:000005">
    <property type="entry name" value="Cadherin EGF LAG seven-pass G-type receptor 2"/>
    <property type="match status" value="1"/>
</dbReference>
<dbReference type="FunFam" id="1.25.40.610:FF:000005">
    <property type="entry name" value="cadherin EGF LAG seven-pass G-type receptor 2"/>
    <property type="match status" value="1"/>
</dbReference>
<dbReference type="FunFam" id="2.10.25.10:FF:000156">
    <property type="entry name" value="cadherin EGF LAG seven-pass G-type receptor 2"/>
    <property type="match status" value="1"/>
</dbReference>
<dbReference type="FunFam" id="2.10.25.10:FF:000285">
    <property type="entry name" value="cadherin EGF LAG seven-pass G-type receptor 2"/>
    <property type="match status" value="1"/>
</dbReference>
<dbReference type="FunFam" id="2.10.25.10:FF:000089">
    <property type="entry name" value="Cadherin EGF LAG seven-pass G-type receptor 3"/>
    <property type="match status" value="1"/>
</dbReference>
<dbReference type="FunFam" id="2.60.40.60:FF:000010">
    <property type="entry name" value="Cadherin EGF LAG seven-pass G-type receptor 3"/>
    <property type="match status" value="1"/>
</dbReference>
<dbReference type="FunFam" id="2.60.40.60:FF:000029">
    <property type="entry name" value="Cadherin EGF LAG seven-pass G-type receptor 3"/>
    <property type="match status" value="1"/>
</dbReference>
<dbReference type="FunFam" id="2.60.40.60:FF:000038">
    <property type="entry name" value="Cadherin EGF LAG seven-pass G-type receptor 3"/>
    <property type="match status" value="1"/>
</dbReference>
<dbReference type="FunFam" id="2.10.25.10:FF:000113">
    <property type="entry name" value="Cadherin, EGF LAG seven-pass G-type receptor 3"/>
    <property type="match status" value="1"/>
</dbReference>
<dbReference type="FunFam" id="4.10.1240.10:FF:000003">
    <property type="entry name" value="Putative cadherin EGF LAG seven-pass G-type receptor 2"/>
    <property type="match status" value="1"/>
</dbReference>
<dbReference type="FunFam" id="2.10.25.10:FF:000864">
    <property type="entry name" value="Y-linked cadherin EGF LAG seven-pass G-type receptor 2"/>
    <property type="match status" value="1"/>
</dbReference>
<dbReference type="Gene3D" id="1.25.40.610">
    <property type="match status" value="1"/>
</dbReference>
<dbReference type="Gene3D" id="2.60.120.200">
    <property type="match status" value="2"/>
</dbReference>
<dbReference type="Gene3D" id="2.60.220.50">
    <property type="match status" value="1"/>
</dbReference>
<dbReference type="Gene3D" id="2.60.40.60">
    <property type="entry name" value="Cadherins"/>
    <property type="match status" value="4"/>
</dbReference>
<dbReference type="Gene3D" id="4.10.1240.10">
    <property type="entry name" value="GPCR, family 2, extracellular hormone receptor domain"/>
    <property type="match status" value="1"/>
</dbReference>
<dbReference type="Gene3D" id="2.10.25.10">
    <property type="entry name" value="Laminin"/>
    <property type="match status" value="7"/>
</dbReference>
<dbReference type="Gene3D" id="1.20.1070.10">
    <property type="entry name" value="Rhodopsin 7-helix transmembrane proteins"/>
    <property type="match status" value="1"/>
</dbReference>
<dbReference type="InterPro" id="IPR002126">
    <property type="entry name" value="Cadherin-like_dom"/>
</dbReference>
<dbReference type="InterPro" id="IPR015919">
    <property type="entry name" value="Cadherin-like_sf"/>
</dbReference>
<dbReference type="InterPro" id="IPR056286">
    <property type="entry name" value="Cadherin_CELSR1-3_9th"/>
</dbReference>
<dbReference type="InterPro" id="IPR020894">
    <property type="entry name" value="Cadherin_CS"/>
</dbReference>
<dbReference type="InterPro" id="IPR013320">
    <property type="entry name" value="ConA-like_dom_sf"/>
</dbReference>
<dbReference type="InterPro" id="IPR001881">
    <property type="entry name" value="EGF-like_Ca-bd_dom"/>
</dbReference>
<dbReference type="InterPro" id="IPR000742">
    <property type="entry name" value="EGF-like_dom"/>
</dbReference>
<dbReference type="InterPro" id="IPR000152">
    <property type="entry name" value="EGF-type_Asp/Asn_hydroxyl_site"/>
</dbReference>
<dbReference type="InterPro" id="IPR057244">
    <property type="entry name" value="GAIN_B"/>
</dbReference>
<dbReference type="InterPro" id="IPR032471">
    <property type="entry name" value="GAIN_dom_N"/>
</dbReference>
<dbReference type="InterPro" id="IPR046338">
    <property type="entry name" value="GAIN_dom_sf"/>
</dbReference>
<dbReference type="InterPro" id="IPR017981">
    <property type="entry name" value="GPCR_2-like_7TM"/>
</dbReference>
<dbReference type="InterPro" id="IPR036445">
    <property type="entry name" value="GPCR_2_extracell_dom_sf"/>
</dbReference>
<dbReference type="InterPro" id="IPR001879">
    <property type="entry name" value="GPCR_2_extracellular_dom"/>
</dbReference>
<dbReference type="InterPro" id="IPR000832">
    <property type="entry name" value="GPCR_2_secretin-like"/>
</dbReference>
<dbReference type="InterPro" id="IPR000203">
    <property type="entry name" value="GPS"/>
</dbReference>
<dbReference type="InterPro" id="IPR001791">
    <property type="entry name" value="Laminin_G"/>
</dbReference>
<dbReference type="InterPro" id="IPR002049">
    <property type="entry name" value="LE_dom"/>
</dbReference>
<dbReference type="PANTHER" id="PTHR24026:SF32">
    <property type="entry name" value="CADHERIN EGF LAG SEVEN-PASS G-TYPE RECEPTOR 2"/>
    <property type="match status" value="1"/>
</dbReference>
<dbReference type="PANTHER" id="PTHR24026">
    <property type="entry name" value="FAT ATYPICAL CADHERIN-RELATED"/>
    <property type="match status" value="1"/>
</dbReference>
<dbReference type="Pfam" id="PF00002">
    <property type="entry name" value="7tm_2"/>
    <property type="match status" value="1"/>
</dbReference>
<dbReference type="Pfam" id="PF00028">
    <property type="entry name" value="Cadherin"/>
    <property type="match status" value="2"/>
</dbReference>
<dbReference type="Pfam" id="PF23592">
    <property type="entry name" value="Cadherin_CELSR2_9th"/>
    <property type="match status" value="1"/>
</dbReference>
<dbReference type="Pfam" id="PF00008">
    <property type="entry name" value="EGF"/>
    <property type="match status" value="2"/>
</dbReference>
<dbReference type="Pfam" id="PF00053">
    <property type="entry name" value="EGF_laminin"/>
    <property type="match status" value="1"/>
</dbReference>
<dbReference type="Pfam" id="PF16489">
    <property type="entry name" value="GAIN"/>
    <property type="match status" value="1"/>
</dbReference>
<dbReference type="Pfam" id="PF01825">
    <property type="entry name" value="GPS"/>
    <property type="match status" value="1"/>
</dbReference>
<dbReference type="Pfam" id="PF02210">
    <property type="entry name" value="Laminin_G_2"/>
    <property type="match status" value="2"/>
</dbReference>
<dbReference type="PRINTS" id="PR00205">
    <property type="entry name" value="CADHERIN"/>
</dbReference>
<dbReference type="PRINTS" id="PR00249">
    <property type="entry name" value="GPCRSECRETIN"/>
</dbReference>
<dbReference type="SMART" id="SM00112">
    <property type="entry name" value="CA"/>
    <property type="match status" value="3"/>
</dbReference>
<dbReference type="SMART" id="SM00181">
    <property type="entry name" value="EGF"/>
    <property type="match status" value="6"/>
</dbReference>
<dbReference type="SMART" id="SM00179">
    <property type="entry name" value="EGF_CA"/>
    <property type="match status" value="4"/>
</dbReference>
<dbReference type="SMART" id="SM00180">
    <property type="entry name" value="EGF_Lam"/>
    <property type="match status" value="1"/>
</dbReference>
<dbReference type="SMART" id="SM00303">
    <property type="entry name" value="GPS"/>
    <property type="match status" value="1"/>
</dbReference>
<dbReference type="SMART" id="SM00008">
    <property type="entry name" value="HormR"/>
    <property type="match status" value="1"/>
</dbReference>
<dbReference type="SMART" id="SM00282">
    <property type="entry name" value="LamG"/>
    <property type="match status" value="2"/>
</dbReference>
<dbReference type="SUPFAM" id="SSF49313">
    <property type="entry name" value="Cadherin-like"/>
    <property type="match status" value="4"/>
</dbReference>
<dbReference type="SUPFAM" id="SSF49899">
    <property type="entry name" value="Concanavalin A-like lectins/glucanases"/>
    <property type="match status" value="2"/>
</dbReference>
<dbReference type="SUPFAM" id="SSF57196">
    <property type="entry name" value="EGF/Laminin"/>
    <property type="match status" value="4"/>
</dbReference>
<dbReference type="PROSITE" id="PS00010">
    <property type="entry name" value="ASX_HYDROXYL"/>
    <property type="match status" value="2"/>
</dbReference>
<dbReference type="PROSITE" id="PS00232">
    <property type="entry name" value="CADHERIN_1"/>
    <property type="match status" value="3"/>
</dbReference>
<dbReference type="PROSITE" id="PS50268">
    <property type="entry name" value="CADHERIN_2"/>
    <property type="match status" value="4"/>
</dbReference>
<dbReference type="PROSITE" id="PS00022">
    <property type="entry name" value="EGF_1"/>
    <property type="match status" value="6"/>
</dbReference>
<dbReference type="PROSITE" id="PS01186">
    <property type="entry name" value="EGF_2"/>
    <property type="match status" value="4"/>
</dbReference>
<dbReference type="PROSITE" id="PS50026">
    <property type="entry name" value="EGF_3"/>
    <property type="match status" value="6"/>
</dbReference>
<dbReference type="PROSITE" id="PS01248">
    <property type="entry name" value="EGF_LAM_1"/>
    <property type="match status" value="1"/>
</dbReference>
<dbReference type="PROSITE" id="PS50027">
    <property type="entry name" value="EGF_LAM_2"/>
    <property type="match status" value="2"/>
</dbReference>
<dbReference type="PROSITE" id="PS50227">
    <property type="entry name" value="G_PROTEIN_RECEP_F2_3"/>
    <property type="match status" value="1"/>
</dbReference>
<dbReference type="PROSITE" id="PS50261">
    <property type="entry name" value="G_PROTEIN_RECEP_F2_4"/>
    <property type="match status" value="1"/>
</dbReference>
<dbReference type="PROSITE" id="PS50221">
    <property type="entry name" value="GAIN_B"/>
    <property type="match status" value="1"/>
</dbReference>
<dbReference type="PROSITE" id="PS50025">
    <property type="entry name" value="LAM_G_DOMAIN"/>
    <property type="match status" value="2"/>
</dbReference>
<name>CELR2_RAT</name>